<organism>
    <name type="scientific">Actinobacillus succinogenes (strain ATCC 55618 / DSM 22257 / CCUG 43843 / 130Z)</name>
    <dbReference type="NCBI Taxonomy" id="339671"/>
    <lineage>
        <taxon>Bacteria</taxon>
        <taxon>Pseudomonadati</taxon>
        <taxon>Pseudomonadota</taxon>
        <taxon>Gammaproteobacteria</taxon>
        <taxon>Pasteurellales</taxon>
        <taxon>Pasteurellaceae</taxon>
        <taxon>Actinobacillus</taxon>
    </lineage>
</organism>
<name>SYP_ACTSZ</name>
<reference key="1">
    <citation type="journal article" date="2010" name="BMC Genomics">
        <title>A genomic perspective on the potential of Actinobacillus succinogenes for industrial succinate production.</title>
        <authorList>
            <person name="McKinlay J.B."/>
            <person name="Laivenieks M."/>
            <person name="Schindler B.D."/>
            <person name="McKinlay A.A."/>
            <person name="Siddaramappa S."/>
            <person name="Challacombe J.F."/>
            <person name="Lowry S.R."/>
            <person name="Clum A."/>
            <person name="Lapidus A.L."/>
            <person name="Burkhart K.B."/>
            <person name="Harkins V."/>
            <person name="Vieille C."/>
        </authorList>
    </citation>
    <scope>NUCLEOTIDE SEQUENCE [LARGE SCALE GENOMIC DNA]</scope>
    <source>
        <strain>ATCC 55618 / DSM 22257 / CCUG 43843 / 130Z</strain>
    </source>
</reference>
<comment type="function">
    <text evidence="1">Catalyzes the attachment of proline to tRNA(Pro) in a two-step reaction: proline is first activated by ATP to form Pro-AMP and then transferred to the acceptor end of tRNA(Pro). As ProRS can inadvertently accommodate and process non-cognate amino acids such as alanine and cysteine, to avoid such errors it has two additional distinct editing activities against alanine. One activity is designated as 'pretransfer' editing and involves the tRNA(Pro)-independent hydrolysis of activated Ala-AMP. The other activity is designated 'posttransfer' editing and involves deacylation of mischarged Ala-tRNA(Pro). The misacylated Cys-tRNA(Pro) is not edited by ProRS.</text>
</comment>
<comment type="catalytic activity">
    <reaction evidence="1">
        <text>tRNA(Pro) + L-proline + ATP = L-prolyl-tRNA(Pro) + AMP + diphosphate</text>
        <dbReference type="Rhea" id="RHEA:14305"/>
        <dbReference type="Rhea" id="RHEA-COMP:9700"/>
        <dbReference type="Rhea" id="RHEA-COMP:9702"/>
        <dbReference type="ChEBI" id="CHEBI:30616"/>
        <dbReference type="ChEBI" id="CHEBI:33019"/>
        <dbReference type="ChEBI" id="CHEBI:60039"/>
        <dbReference type="ChEBI" id="CHEBI:78442"/>
        <dbReference type="ChEBI" id="CHEBI:78532"/>
        <dbReference type="ChEBI" id="CHEBI:456215"/>
        <dbReference type="EC" id="6.1.1.15"/>
    </reaction>
</comment>
<comment type="subunit">
    <text evidence="1">Homodimer.</text>
</comment>
<comment type="subcellular location">
    <subcellularLocation>
        <location evidence="1">Cytoplasm</location>
    </subcellularLocation>
</comment>
<comment type="domain">
    <text evidence="1">Consists of three domains: the N-terminal catalytic domain, the editing domain and the C-terminal anticodon-binding domain.</text>
</comment>
<comment type="similarity">
    <text evidence="1">Belongs to the class-II aminoacyl-tRNA synthetase family. ProS type 1 subfamily.</text>
</comment>
<dbReference type="EC" id="6.1.1.15" evidence="1"/>
<dbReference type="EMBL" id="CP000746">
    <property type="protein sequence ID" value="ABR73562.1"/>
    <property type="molecule type" value="Genomic_DNA"/>
</dbReference>
<dbReference type="RefSeq" id="WP_011978838.1">
    <property type="nucleotide sequence ID" value="NC_009655.1"/>
</dbReference>
<dbReference type="SMR" id="A6VKR5"/>
<dbReference type="STRING" id="339671.Asuc_0182"/>
<dbReference type="KEGG" id="asu:Asuc_0182"/>
<dbReference type="eggNOG" id="COG0442">
    <property type="taxonomic scope" value="Bacteria"/>
</dbReference>
<dbReference type="HOGENOM" id="CLU_016739_0_0_6"/>
<dbReference type="OrthoDB" id="9809052at2"/>
<dbReference type="Proteomes" id="UP000001114">
    <property type="component" value="Chromosome"/>
</dbReference>
<dbReference type="GO" id="GO:0005829">
    <property type="term" value="C:cytosol"/>
    <property type="evidence" value="ECO:0007669"/>
    <property type="project" value="TreeGrafter"/>
</dbReference>
<dbReference type="GO" id="GO:0002161">
    <property type="term" value="F:aminoacyl-tRNA deacylase activity"/>
    <property type="evidence" value="ECO:0007669"/>
    <property type="project" value="InterPro"/>
</dbReference>
<dbReference type="GO" id="GO:0005524">
    <property type="term" value="F:ATP binding"/>
    <property type="evidence" value="ECO:0007669"/>
    <property type="project" value="UniProtKB-UniRule"/>
</dbReference>
<dbReference type="GO" id="GO:0004827">
    <property type="term" value="F:proline-tRNA ligase activity"/>
    <property type="evidence" value="ECO:0007669"/>
    <property type="project" value="UniProtKB-UniRule"/>
</dbReference>
<dbReference type="GO" id="GO:0006433">
    <property type="term" value="P:prolyl-tRNA aminoacylation"/>
    <property type="evidence" value="ECO:0007669"/>
    <property type="project" value="UniProtKB-UniRule"/>
</dbReference>
<dbReference type="CDD" id="cd04334">
    <property type="entry name" value="ProRS-INS"/>
    <property type="match status" value="1"/>
</dbReference>
<dbReference type="CDD" id="cd00861">
    <property type="entry name" value="ProRS_anticodon_short"/>
    <property type="match status" value="1"/>
</dbReference>
<dbReference type="CDD" id="cd00779">
    <property type="entry name" value="ProRS_core_prok"/>
    <property type="match status" value="1"/>
</dbReference>
<dbReference type="FunFam" id="3.30.930.10:FF:000043">
    <property type="entry name" value="Proline--tRNA ligase"/>
    <property type="match status" value="1"/>
</dbReference>
<dbReference type="FunFam" id="3.30.930.10:FF:000097">
    <property type="entry name" value="Proline--tRNA ligase"/>
    <property type="match status" value="1"/>
</dbReference>
<dbReference type="FunFam" id="3.40.50.800:FF:000006">
    <property type="entry name" value="Proline--tRNA ligase"/>
    <property type="match status" value="1"/>
</dbReference>
<dbReference type="Gene3D" id="3.40.50.800">
    <property type="entry name" value="Anticodon-binding domain"/>
    <property type="match status" value="1"/>
</dbReference>
<dbReference type="Gene3D" id="3.30.930.10">
    <property type="entry name" value="Bira Bifunctional Protein, Domain 2"/>
    <property type="match status" value="2"/>
</dbReference>
<dbReference type="HAMAP" id="MF_01569">
    <property type="entry name" value="Pro_tRNA_synth_type1"/>
    <property type="match status" value="1"/>
</dbReference>
<dbReference type="InterPro" id="IPR002314">
    <property type="entry name" value="aa-tRNA-synt_IIb"/>
</dbReference>
<dbReference type="InterPro" id="IPR006195">
    <property type="entry name" value="aa-tRNA-synth_II"/>
</dbReference>
<dbReference type="InterPro" id="IPR045864">
    <property type="entry name" value="aa-tRNA-synth_II/BPL/LPL"/>
</dbReference>
<dbReference type="InterPro" id="IPR004154">
    <property type="entry name" value="Anticodon-bd"/>
</dbReference>
<dbReference type="InterPro" id="IPR036621">
    <property type="entry name" value="Anticodon-bd_dom_sf"/>
</dbReference>
<dbReference type="InterPro" id="IPR002316">
    <property type="entry name" value="Pro-tRNA-ligase_IIa"/>
</dbReference>
<dbReference type="InterPro" id="IPR004500">
    <property type="entry name" value="Pro-tRNA-synth_IIa_bac-type"/>
</dbReference>
<dbReference type="InterPro" id="IPR023717">
    <property type="entry name" value="Pro-tRNA-Synthase_IIa_type1"/>
</dbReference>
<dbReference type="InterPro" id="IPR050062">
    <property type="entry name" value="Pro-tRNA_synthetase"/>
</dbReference>
<dbReference type="InterPro" id="IPR044140">
    <property type="entry name" value="ProRS_anticodon_short"/>
</dbReference>
<dbReference type="InterPro" id="IPR033730">
    <property type="entry name" value="ProRS_core_prok"/>
</dbReference>
<dbReference type="InterPro" id="IPR036754">
    <property type="entry name" value="YbaK/aa-tRNA-synt-asso_dom_sf"/>
</dbReference>
<dbReference type="InterPro" id="IPR007214">
    <property type="entry name" value="YbaK/aa-tRNA-synth-assoc-dom"/>
</dbReference>
<dbReference type="NCBIfam" id="NF006625">
    <property type="entry name" value="PRK09194.1"/>
    <property type="match status" value="1"/>
</dbReference>
<dbReference type="NCBIfam" id="TIGR00409">
    <property type="entry name" value="proS_fam_II"/>
    <property type="match status" value="1"/>
</dbReference>
<dbReference type="PANTHER" id="PTHR42753">
    <property type="entry name" value="MITOCHONDRIAL RIBOSOME PROTEIN L39/PROLYL-TRNA LIGASE FAMILY MEMBER"/>
    <property type="match status" value="1"/>
</dbReference>
<dbReference type="PANTHER" id="PTHR42753:SF2">
    <property type="entry name" value="PROLINE--TRNA LIGASE"/>
    <property type="match status" value="1"/>
</dbReference>
<dbReference type="Pfam" id="PF03129">
    <property type="entry name" value="HGTP_anticodon"/>
    <property type="match status" value="1"/>
</dbReference>
<dbReference type="Pfam" id="PF00587">
    <property type="entry name" value="tRNA-synt_2b"/>
    <property type="match status" value="1"/>
</dbReference>
<dbReference type="Pfam" id="PF04073">
    <property type="entry name" value="tRNA_edit"/>
    <property type="match status" value="1"/>
</dbReference>
<dbReference type="PIRSF" id="PIRSF001535">
    <property type="entry name" value="ProRS_1"/>
    <property type="match status" value="1"/>
</dbReference>
<dbReference type="PRINTS" id="PR01046">
    <property type="entry name" value="TRNASYNTHPRO"/>
</dbReference>
<dbReference type="SUPFAM" id="SSF52954">
    <property type="entry name" value="Class II aaRS ABD-related"/>
    <property type="match status" value="1"/>
</dbReference>
<dbReference type="SUPFAM" id="SSF55681">
    <property type="entry name" value="Class II aaRS and biotin synthetases"/>
    <property type="match status" value="1"/>
</dbReference>
<dbReference type="SUPFAM" id="SSF55826">
    <property type="entry name" value="YbaK/ProRS associated domain"/>
    <property type="match status" value="1"/>
</dbReference>
<dbReference type="PROSITE" id="PS50862">
    <property type="entry name" value="AA_TRNA_LIGASE_II"/>
    <property type="match status" value="1"/>
</dbReference>
<protein>
    <recommendedName>
        <fullName evidence="1">Proline--tRNA ligase</fullName>
        <ecNumber evidence="1">6.1.1.15</ecNumber>
    </recommendedName>
    <alternativeName>
        <fullName evidence="1">Prolyl-tRNA synthetase</fullName>
        <shortName evidence="1">ProRS</shortName>
    </alternativeName>
</protein>
<accession>A6VKR5</accession>
<gene>
    <name evidence="1" type="primary">proS</name>
    <name type="ordered locus">Asuc_0182</name>
</gene>
<keyword id="KW-0030">Aminoacyl-tRNA synthetase</keyword>
<keyword id="KW-0067">ATP-binding</keyword>
<keyword id="KW-0963">Cytoplasm</keyword>
<keyword id="KW-0436">Ligase</keyword>
<keyword id="KW-0547">Nucleotide-binding</keyword>
<keyword id="KW-0648">Protein biosynthesis</keyword>
<keyword id="KW-1185">Reference proteome</keyword>
<sequence length="571" mass="63561">MRTSQYLFSTLKETPNDAQVVSHQLMLRAGMIRSMASGLYNWLPTGVKVLKKVENIIREEMNKGGAIEVLMPVVQSAELWQESGRWEQYGPELLRFSDRGNRDFVLGPTHEEVITDLVRREVSSYKQLPLNLYQIQTKFRDEVRPRFGVMRSREFVMKDAYSFHTTQESLQQTYEVMYQVYTNIFTRLGLDFRAVQADTGSIGGSASHEFQVLASSGEDDVVFSTESDFAANIELAEAIAVGERQAPGKAMELVDTPNAKTIAELVEQFNLPIEKTVKTLIVKGATEDAPLVALIIRGDHELNEIKAQKHPLVADPLEFADETEIKAKIGAGVGSLGPVNLNIPAIIDRSVALMSDFGAGANIDGKHYFNINWERDAAMPEAFDLRNVAEGDPSPDGKGTLQIKRGIEVGHIFQLGKKYSEAMNATVQGEDGKPLVMTMGCYGIGVTRVVAAAIEQHHDERGIIWPTDEIAPFTVAIVPMNMHKSESVRAFAEELYQTLKAQGVDVIFDDRKERPGVMFADMELIGVPHMVVIGEKNLDKGEIEYKNRRNGEKQMIAKDRLLAFLAENVKA</sequence>
<evidence type="ECO:0000255" key="1">
    <source>
        <dbReference type="HAMAP-Rule" id="MF_01569"/>
    </source>
</evidence>
<proteinExistence type="inferred from homology"/>
<feature type="chain" id="PRO_1000073586" description="Proline--tRNA ligase">
    <location>
        <begin position="1"/>
        <end position="571"/>
    </location>
</feature>